<sequence length="701" mass="79571">MDLWNLSWFLFLDALLVISGLATPENFDVDGGMDQDIFDINEGLGLDLFEGDIRLDRAQIRNSIIGEKYRWPHTIPYVLEDSLEMNAKGVILNAFERYRLKTCIDFKPWAGETNYISVFKGSGCWSSVGNRRVGKQELSIGANCDRIATVQHEFLHALGFWHEQSRSDRDDYVRIMWDRILSGREHNFNTYSDDISDSLNVPYDYTSVMHYSKTAFQNGTEPTIVTRISDFEDVIGQRMDFSDSDLLKLNQLYNCSSSLSFMDSCSFELENVCGMIQSSGDNADWQRVSQVPRGPESDHSNMGQCQGSGFFMHFDSSSVNVGATAVLESRTLYPKRGFQCLQFYLYNSGSESDQLNIYIREYSADNVDGNLTLVEEIKEIPTGSWQLYHVTLKVTKKFRVVFEGRKGSGASLGGLSIDDINLSETRCPHHIWHIRNFTQFIGSPNGTLYSPPFYSSKGYAFQIYLNLAHVTNAGIYFHLISGANDDQLQWPCPWQQATMTLLDQNPDIRQRMSNQRSITTDPFMTTDNGNYFWDRPSKVGTVALFSNGTQFRRGGGYGTSAFITHERLKSRDFIKGDDVYILLTVEDISHLNSTQIQLTPAPSVQDLCSKTTCKNDGVCTVRDGKAECRCQSGEDWWYMGERCEKRGSTRDTIVIAVSSTVAVFALMLIITLVSVYCTRKKYRERMSSNRPNLTPQNQHAF</sequence>
<dbReference type="EC" id="3.4.24.63" evidence="20"/>
<dbReference type="EMBL" id="X81333">
    <property type="protein sequence ID" value="CAA57107.1"/>
    <property type="molecule type" value="mRNA"/>
</dbReference>
<dbReference type="EMBL" id="AY695931">
    <property type="protein sequence ID" value="AAU05377.1"/>
    <property type="molecule type" value="mRNA"/>
</dbReference>
<dbReference type="EMBL" id="BC136559">
    <property type="protein sequence ID" value="AAI36560.1"/>
    <property type="molecule type" value="mRNA"/>
</dbReference>
<dbReference type="EMBL" id="BC144244">
    <property type="protein sequence ID" value="AAI44245.1"/>
    <property type="molecule type" value="mRNA"/>
</dbReference>
<dbReference type="CCDS" id="CCDS45846.1"/>
<dbReference type="PIR" id="S49383">
    <property type="entry name" value="HYHUMB"/>
</dbReference>
<dbReference type="RefSeq" id="NP_001295100.1">
    <property type="nucleotide sequence ID" value="NM_001308171.1"/>
</dbReference>
<dbReference type="RefSeq" id="NP_005916.2">
    <property type="nucleotide sequence ID" value="NM_005925.3"/>
</dbReference>
<dbReference type="PDB" id="4GWM">
    <property type="method" value="X-ray"/>
    <property type="resolution" value="1.85 A"/>
    <property type="chains" value="A/B=23-614"/>
</dbReference>
<dbReference type="PDB" id="4GWN">
    <property type="method" value="X-ray"/>
    <property type="resolution" value="3.00 A"/>
    <property type="chains" value="A=62-614"/>
</dbReference>
<dbReference type="PDB" id="7AQ1">
    <property type="method" value="X-ray"/>
    <property type="resolution" value="2.41 A"/>
    <property type="chains" value="A/B=62-595"/>
</dbReference>
<dbReference type="PDB" id="7AUW">
    <property type="method" value="X-ray"/>
    <property type="resolution" value="2.80 A"/>
    <property type="chains" value="A/C=62-608"/>
</dbReference>
<dbReference type="PDBsum" id="4GWM"/>
<dbReference type="PDBsum" id="4GWN"/>
<dbReference type="PDBsum" id="7AQ1"/>
<dbReference type="PDBsum" id="7AUW"/>
<dbReference type="SMR" id="Q16820"/>
<dbReference type="BioGRID" id="110388">
    <property type="interactions" value="5"/>
</dbReference>
<dbReference type="CORUM" id="Q16820"/>
<dbReference type="DIP" id="DIP-34900N"/>
<dbReference type="FunCoup" id="Q16820">
    <property type="interactions" value="136"/>
</dbReference>
<dbReference type="IntAct" id="Q16820">
    <property type="interactions" value="39"/>
</dbReference>
<dbReference type="MINT" id="Q16820"/>
<dbReference type="STRING" id="9606.ENSP00000269202"/>
<dbReference type="BindingDB" id="Q16820"/>
<dbReference type="ChEMBL" id="CHEMBL4105879"/>
<dbReference type="MEROPS" id="M12.004"/>
<dbReference type="TCDB" id="8.A.77.2.1">
    <property type="family name" value="the sheddase (sheddase) family"/>
</dbReference>
<dbReference type="GlyCosmos" id="Q16820">
    <property type="glycosylation" value="12 sites, No reported glycans"/>
</dbReference>
<dbReference type="GlyGen" id="Q16820">
    <property type="glycosylation" value="12 sites"/>
</dbReference>
<dbReference type="iPTMnet" id="Q16820"/>
<dbReference type="PhosphoSitePlus" id="Q16820"/>
<dbReference type="BioMuta" id="MEP1B"/>
<dbReference type="DMDM" id="296439304"/>
<dbReference type="MassIVE" id="Q16820"/>
<dbReference type="PaxDb" id="9606-ENSP00000269202"/>
<dbReference type="PeptideAtlas" id="Q16820"/>
<dbReference type="ProteomicsDB" id="61079"/>
<dbReference type="Antibodypedia" id="22196">
    <property type="antibodies" value="69 antibodies from 18 providers"/>
</dbReference>
<dbReference type="DNASU" id="4225"/>
<dbReference type="Ensembl" id="ENST00000269202.11">
    <property type="protein sequence ID" value="ENSP00000269202.6"/>
    <property type="gene ID" value="ENSG00000141434.12"/>
</dbReference>
<dbReference type="GeneID" id="4225"/>
<dbReference type="KEGG" id="hsa:4225"/>
<dbReference type="MANE-Select" id="ENST00000269202.11">
    <property type="protein sequence ID" value="ENSP00000269202.6"/>
    <property type="RefSeq nucleotide sequence ID" value="NM_005925.3"/>
    <property type="RefSeq protein sequence ID" value="NP_005916.2"/>
</dbReference>
<dbReference type="UCSC" id="uc002kxj.5">
    <property type="organism name" value="human"/>
</dbReference>
<dbReference type="AGR" id="HGNC:7020"/>
<dbReference type="CTD" id="4225"/>
<dbReference type="DisGeNET" id="4225"/>
<dbReference type="GeneCards" id="MEP1B"/>
<dbReference type="HGNC" id="HGNC:7020">
    <property type="gene designation" value="MEP1B"/>
</dbReference>
<dbReference type="HPA" id="ENSG00000141434">
    <property type="expression patterns" value="Tissue enriched (intestine)"/>
</dbReference>
<dbReference type="MIM" id="600389">
    <property type="type" value="gene"/>
</dbReference>
<dbReference type="neXtProt" id="NX_Q16820"/>
<dbReference type="OpenTargets" id="ENSG00000141434"/>
<dbReference type="PharmGKB" id="PA30754"/>
<dbReference type="VEuPathDB" id="HostDB:ENSG00000141434"/>
<dbReference type="eggNOG" id="KOG3714">
    <property type="taxonomic scope" value="Eukaryota"/>
</dbReference>
<dbReference type="GeneTree" id="ENSGT00950000183111"/>
<dbReference type="InParanoid" id="Q16820"/>
<dbReference type="OMA" id="VYCTRKR"/>
<dbReference type="OrthoDB" id="291007at2759"/>
<dbReference type="PAN-GO" id="Q16820">
    <property type="GO annotations" value="1 GO annotation based on evolutionary models"/>
</dbReference>
<dbReference type="PhylomeDB" id="Q16820"/>
<dbReference type="TreeFam" id="TF315280"/>
<dbReference type="BRENDA" id="3.4.24.18">
    <property type="organism ID" value="2681"/>
</dbReference>
<dbReference type="BRENDA" id="3.4.24.63">
    <property type="organism ID" value="2681"/>
</dbReference>
<dbReference type="PathwayCommons" id="Q16820"/>
<dbReference type="SignaLink" id="Q16820"/>
<dbReference type="SIGNOR" id="Q16820"/>
<dbReference type="BioGRID-ORCS" id="4225">
    <property type="hits" value="13 hits in 1144 CRISPR screens"/>
</dbReference>
<dbReference type="EvolutionaryTrace" id="Q16820"/>
<dbReference type="GeneWiki" id="MEP1B"/>
<dbReference type="GenomeRNAi" id="4225"/>
<dbReference type="Pharos" id="Q16820">
    <property type="development level" value="Tchem"/>
</dbReference>
<dbReference type="PRO" id="PR:Q16820"/>
<dbReference type="Proteomes" id="UP000005640">
    <property type="component" value="Chromosome 18"/>
</dbReference>
<dbReference type="RNAct" id="Q16820">
    <property type="molecule type" value="protein"/>
</dbReference>
<dbReference type="Bgee" id="ENSG00000141434">
    <property type="expression patterns" value="Expressed in jejunal mucosa and 102 other cell types or tissues"/>
</dbReference>
<dbReference type="ExpressionAtlas" id="Q16820">
    <property type="expression patterns" value="baseline and differential"/>
</dbReference>
<dbReference type="GO" id="GO:0005576">
    <property type="term" value="C:extracellular region"/>
    <property type="evidence" value="ECO:0007669"/>
    <property type="project" value="UniProtKB-SubCell"/>
</dbReference>
<dbReference type="GO" id="GO:0017090">
    <property type="term" value="C:meprin A complex"/>
    <property type="evidence" value="ECO:0000314"/>
    <property type="project" value="GO_Central"/>
</dbReference>
<dbReference type="GO" id="GO:0005886">
    <property type="term" value="C:plasma membrane"/>
    <property type="evidence" value="ECO:0000314"/>
    <property type="project" value="GO_Central"/>
</dbReference>
<dbReference type="GO" id="GO:0042802">
    <property type="term" value="F:identical protein binding"/>
    <property type="evidence" value="ECO:0000353"/>
    <property type="project" value="IntAct"/>
</dbReference>
<dbReference type="GO" id="GO:0004222">
    <property type="term" value="F:metalloendopeptidase activity"/>
    <property type="evidence" value="ECO:0000318"/>
    <property type="project" value="GO_Central"/>
</dbReference>
<dbReference type="GO" id="GO:0008270">
    <property type="term" value="F:zinc ion binding"/>
    <property type="evidence" value="ECO:0007669"/>
    <property type="project" value="InterPro"/>
</dbReference>
<dbReference type="GO" id="GO:0006954">
    <property type="term" value="P:inflammatory response"/>
    <property type="evidence" value="ECO:0007669"/>
    <property type="project" value="UniProtKB-KW"/>
</dbReference>
<dbReference type="GO" id="GO:0006508">
    <property type="term" value="P:proteolysis"/>
    <property type="evidence" value="ECO:0007669"/>
    <property type="project" value="UniProtKB-KW"/>
</dbReference>
<dbReference type="CDD" id="cd00054">
    <property type="entry name" value="EGF_CA"/>
    <property type="match status" value="1"/>
</dbReference>
<dbReference type="CDD" id="cd06263">
    <property type="entry name" value="MAM"/>
    <property type="match status" value="1"/>
</dbReference>
<dbReference type="CDD" id="cd04282">
    <property type="entry name" value="ZnMc_meprin"/>
    <property type="match status" value="1"/>
</dbReference>
<dbReference type="FunFam" id="2.10.25.10:FF:000363">
    <property type="entry name" value="Meprin A subunit"/>
    <property type="match status" value="1"/>
</dbReference>
<dbReference type="FunFam" id="2.60.120.200:FF:000037">
    <property type="entry name" value="Meprin A subunit"/>
    <property type="match status" value="1"/>
</dbReference>
<dbReference type="FunFam" id="2.60.210.10:FF:000009">
    <property type="entry name" value="Meprin A subunit"/>
    <property type="match status" value="1"/>
</dbReference>
<dbReference type="FunFam" id="3.40.390.10:FF:000015">
    <property type="entry name" value="Meprin A subunit"/>
    <property type="match status" value="1"/>
</dbReference>
<dbReference type="Gene3D" id="2.60.120.200">
    <property type="match status" value="1"/>
</dbReference>
<dbReference type="Gene3D" id="2.60.210.10">
    <property type="entry name" value="Apoptosis, Tumor Necrosis Factor Receptor Associated Protein 2, Chain A"/>
    <property type="match status" value="1"/>
</dbReference>
<dbReference type="Gene3D" id="3.40.390.10">
    <property type="entry name" value="Collagenase (Catalytic Domain)"/>
    <property type="match status" value="1"/>
</dbReference>
<dbReference type="Gene3D" id="2.10.25.10">
    <property type="entry name" value="Laminin"/>
    <property type="match status" value="1"/>
</dbReference>
<dbReference type="InterPro" id="IPR013320">
    <property type="entry name" value="ConA-like_dom_sf"/>
</dbReference>
<dbReference type="InterPro" id="IPR000742">
    <property type="entry name" value="EGF-like_dom"/>
</dbReference>
<dbReference type="InterPro" id="IPR000998">
    <property type="entry name" value="MAM_dom"/>
</dbReference>
<dbReference type="InterPro" id="IPR002083">
    <property type="entry name" value="MATH/TRAF_dom"/>
</dbReference>
<dbReference type="InterPro" id="IPR008294">
    <property type="entry name" value="Meprin"/>
</dbReference>
<dbReference type="InterPro" id="IPR024079">
    <property type="entry name" value="MetalloPept_cat_dom_sf"/>
</dbReference>
<dbReference type="InterPro" id="IPR001506">
    <property type="entry name" value="Peptidase_M12A"/>
</dbReference>
<dbReference type="InterPro" id="IPR006026">
    <property type="entry name" value="Peptidase_Metallo"/>
</dbReference>
<dbReference type="InterPro" id="IPR008974">
    <property type="entry name" value="TRAF-like"/>
</dbReference>
<dbReference type="InterPro" id="IPR034038">
    <property type="entry name" value="ZnMP_meprin"/>
</dbReference>
<dbReference type="PANTHER" id="PTHR10127">
    <property type="entry name" value="DISCOIDIN, CUB, EGF, LAMININ , AND ZINC METALLOPROTEASE DOMAIN CONTAINING"/>
    <property type="match status" value="1"/>
</dbReference>
<dbReference type="PANTHER" id="PTHR10127:SF814">
    <property type="entry name" value="MEPRIN A SUBUNIT BETA"/>
    <property type="match status" value="1"/>
</dbReference>
<dbReference type="Pfam" id="PF01400">
    <property type="entry name" value="Astacin"/>
    <property type="match status" value="1"/>
</dbReference>
<dbReference type="Pfam" id="PF00629">
    <property type="entry name" value="MAM"/>
    <property type="match status" value="1"/>
</dbReference>
<dbReference type="Pfam" id="PF22486">
    <property type="entry name" value="MATH_2"/>
    <property type="match status" value="1"/>
</dbReference>
<dbReference type="PIRSF" id="PIRSF001196">
    <property type="entry name" value="Meprin"/>
    <property type="match status" value="1"/>
</dbReference>
<dbReference type="PRINTS" id="PR00480">
    <property type="entry name" value="ASTACIN"/>
</dbReference>
<dbReference type="PRINTS" id="PR00020">
    <property type="entry name" value="MAMDOMAIN"/>
</dbReference>
<dbReference type="SMART" id="SM00137">
    <property type="entry name" value="MAM"/>
    <property type="match status" value="1"/>
</dbReference>
<dbReference type="SMART" id="SM00061">
    <property type="entry name" value="MATH"/>
    <property type="match status" value="1"/>
</dbReference>
<dbReference type="SMART" id="SM00235">
    <property type="entry name" value="ZnMc"/>
    <property type="match status" value="1"/>
</dbReference>
<dbReference type="SUPFAM" id="SSF49899">
    <property type="entry name" value="Concanavalin A-like lectins/glucanases"/>
    <property type="match status" value="1"/>
</dbReference>
<dbReference type="SUPFAM" id="SSF55486">
    <property type="entry name" value="Metalloproteases ('zincins'), catalytic domain"/>
    <property type="match status" value="1"/>
</dbReference>
<dbReference type="SUPFAM" id="SSF49599">
    <property type="entry name" value="TRAF domain-like"/>
    <property type="match status" value="1"/>
</dbReference>
<dbReference type="PROSITE" id="PS51864">
    <property type="entry name" value="ASTACIN"/>
    <property type="match status" value="1"/>
</dbReference>
<dbReference type="PROSITE" id="PS50026">
    <property type="entry name" value="EGF_3"/>
    <property type="match status" value="1"/>
</dbReference>
<dbReference type="PROSITE" id="PS00740">
    <property type="entry name" value="MAM_1"/>
    <property type="match status" value="1"/>
</dbReference>
<dbReference type="PROSITE" id="PS50060">
    <property type="entry name" value="MAM_2"/>
    <property type="match status" value="1"/>
</dbReference>
<dbReference type="PROSITE" id="PS50144">
    <property type="entry name" value="MATH"/>
    <property type="match status" value="1"/>
</dbReference>
<dbReference type="PROSITE" id="PS00142">
    <property type="entry name" value="ZINC_PROTEASE"/>
    <property type="match status" value="1"/>
</dbReference>
<evidence type="ECO:0000250" key="1">
    <source>
        <dbReference type="UniProtKB" id="Q61847"/>
    </source>
</evidence>
<evidence type="ECO:0000255" key="2"/>
<evidence type="ECO:0000255" key="3">
    <source>
        <dbReference type="PROSITE-ProRule" id="PRU00076"/>
    </source>
</evidence>
<evidence type="ECO:0000255" key="4">
    <source>
        <dbReference type="PROSITE-ProRule" id="PRU00128"/>
    </source>
</evidence>
<evidence type="ECO:0000255" key="5">
    <source>
        <dbReference type="PROSITE-ProRule" id="PRU00129"/>
    </source>
</evidence>
<evidence type="ECO:0000255" key="6">
    <source>
        <dbReference type="PROSITE-ProRule" id="PRU01211"/>
    </source>
</evidence>
<evidence type="ECO:0000269" key="7">
    <source>
    </source>
</evidence>
<evidence type="ECO:0000269" key="8">
    <source>
    </source>
</evidence>
<evidence type="ECO:0000269" key="9">
    <source>
    </source>
</evidence>
<evidence type="ECO:0000269" key="10">
    <source>
    </source>
</evidence>
<evidence type="ECO:0000269" key="11">
    <source>
    </source>
</evidence>
<evidence type="ECO:0000269" key="12">
    <source>
    </source>
</evidence>
<evidence type="ECO:0000269" key="13">
    <source>
    </source>
</evidence>
<evidence type="ECO:0000269" key="14">
    <source>
    </source>
</evidence>
<evidence type="ECO:0000269" key="15">
    <source>
    </source>
</evidence>
<evidence type="ECO:0000269" key="16">
    <source>
    </source>
</evidence>
<evidence type="ECO:0000269" key="17">
    <source>
    </source>
</evidence>
<evidence type="ECO:0000269" key="18">
    <source>
    </source>
</evidence>
<evidence type="ECO:0000269" key="19">
    <source>
    </source>
</evidence>
<evidence type="ECO:0000269" key="20">
    <source>
    </source>
</evidence>
<evidence type="ECO:0000269" key="21">
    <source>
    </source>
</evidence>
<evidence type="ECO:0000269" key="22">
    <source>
    </source>
</evidence>
<evidence type="ECO:0000305" key="23"/>
<evidence type="ECO:0007744" key="24">
    <source>
        <dbReference type="PDB" id="4GWM"/>
    </source>
</evidence>
<evidence type="ECO:0007829" key="25">
    <source>
        <dbReference type="PDB" id="4GWM"/>
    </source>
</evidence>
<evidence type="ECO:0007829" key="26">
    <source>
        <dbReference type="PDB" id="4GWN"/>
    </source>
</evidence>
<evidence type="ECO:0007829" key="27">
    <source>
        <dbReference type="PDB" id="7AQ1"/>
    </source>
</evidence>
<evidence type="ECO:0007829" key="28">
    <source>
        <dbReference type="PDB" id="7AUW"/>
    </source>
</evidence>
<accession>Q16820</accession>
<accession>B7ZM35</accession>
<accession>B9EGL6</accession>
<accession>Q670J1</accession>
<proteinExistence type="evidence at protein level"/>
<gene>
    <name type="primary">MEP1B</name>
</gene>
<comment type="function">
    <text evidence="15 19">Membrane metallopeptidase that sheds many membrane-bound proteins. Exhibits a strong preference for acidic amino acids at the P1' position. Known substrates include: FGF19, VGFA, IL1B, IL18, procollagen I and III, E-cadherin, KLK7, gastrin, ADAM10, tenascin-C. The presence of several pro-inflammatory cytokine among substrates implicate MEP1B in inflammation. It is also involved in tissue remodeling due to its capability to degrade extracellular matrix components. Also cleaves the amyloid precursor protein/APP, thereby releasing neurotoxic amyloid beta peptides (PubMed:27180357).</text>
</comment>
<comment type="catalytic activity">
    <reaction evidence="15">
        <text>Hydrolysis of proteins, including azocasein, and peptides. Hydrolysis of 5-His-|-Leu-6, 6-Leu-|-Cys-7, 14-Ala-|-Leu-15 and 19-Cys-|-Gly-20 bonds in insulin B chain.</text>
        <dbReference type="EC" id="3.4.24.63"/>
    </reaction>
</comment>
<comment type="cofactor">
    <cofactor evidence="6 17">
        <name>Zn(2+)</name>
        <dbReference type="ChEBI" id="CHEBI:29105"/>
    </cofactor>
    <text evidence="6 17">Binds 1 zinc ion per subunit.</text>
</comment>
<comment type="activity regulation">
    <text evidence="14 16">Strongly inhibited by fetuin-A/AHSG.</text>
</comment>
<comment type="subunit">
    <text evidence="1 19">Homotetramer consisting of disulfide-linked beta subunits, or heterotetramer of two alpha and two beta subunits formed by non-covalent association of two disulfide-linked heterodimers (By similarity). Interacts with MBL2 through its carbohydrate moiety. This interaction may inhibit its catalytic activity (By similarity). Interacts with TSPAN8 (PubMed:27180357).</text>
</comment>
<comment type="interaction">
    <interactant intactId="EBI-968418">
        <id>Q16820</id>
    </interactant>
    <interactant intactId="EBI-968418">
        <id>Q16820</id>
        <label>MEP1B</label>
    </interactant>
    <organismsDiffer>false</organismsDiffer>
    <experiments>3</experiments>
</comment>
<comment type="interaction">
    <interactant intactId="EBI-968418">
        <id>Q16820</id>
    </interactant>
    <interactant intactId="EBI-1382326">
        <id>P14780</id>
        <label>MMP9</label>
    </interactant>
    <organismsDiffer>false</organismsDiffer>
    <experiments>2</experiments>
</comment>
<comment type="interaction">
    <interactant intactId="EBI-968418">
        <id>Q16820</id>
    </interactant>
    <interactant intactId="EBI-4289938">
        <id>P19075</id>
        <label>TSPAN8</label>
    </interactant>
    <organismsDiffer>false</organismsDiffer>
    <experiments>4</experiments>
</comment>
<comment type="subcellular location">
    <subcellularLocation>
        <location evidence="17 19 20">Cell membrane</location>
        <topology>Single-pass type I membrane protein</topology>
    </subcellularLocation>
    <subcellularLocation>
        <location evidence="7">Secreted</location>
    </subcellularLocation>
    <text evidence="17">Homodimers are essentially membrane bound but may also be shed from the surface by ADAM-10 and ADAM-17.</text>
</comment>
<comment type="tissue specificity">
    <text evidence="8">The major site of expression is the brush border membrane of small intestinal and kidney epithelial cells.</text>
</comment>
<comment type="PTM">
    <text evidence="20">Phosphorylated by PKC at multiple sites of its cytoplasmic part. Phosphorylation dcreases activity at the cell surface, leading to diminished substrate cleavage.</text>
</comment>
<comment type="PTM">
    <text>N-glycosylated; contains high mannose and/or complex biantennary structures.</text>
</comment>
<comment type="PTM">
    <text evidence="7 9 11 12 13 15 16">O-glycosylation protect the C-terminal region from proteolytic cleavage and diminish secretion, this seems to be specific to human.</text>
</comment>
<comment type="PTM">
    <text>Proteolytically activated by trypsin in the intestinal lumen and kallikrein-related peptidases in other tissues.</text>
</comment>
<organism>
    <name type="scientific">Homo sapiens</name>
    <name type="common">Human</name>
    <dbReference type="NCBI Taxonomy" id="9606"/>
    <lineage>
        <taxon>Eukaryota</taxon>
        <taxon>Metazoa</taxon>
        <taxon>Chordata</taxon>
        <taxon>Craniata</taxon>
        <taxon>Vertebrata</taxon>
        <taxon>Euteleostomi</taxon>
        <taxon>Mammalia</taxon>
        <taxon>Eutheria</taxon>
        <taxon>Euarchontoglires</taxon>
        <taxon>Primates</taxon>
        <taxon>Haplorrhini</taxon>
        <taxon>Catarrhini</taxon>
        <taxon>Hominidae</taxon>
        <taxon>Homo</taxon>
    </lineage>
</organism>
<name>MEP1B_HUMAN</name>
<keyword id="KW-0002">3D-structure</keyword>
<keyword id="KW-1003">Cell membrane</keyword>
<keyword id="KW-0903">Direct protein sequencing</keyword>
<keyword id="KW-1015">Disulfide bond</keyword>
<keyword id="KW-0245">EGF-like domain</keyword>
<keyword id="KW-0325">Glycoprotein</keyword>
<keyword id="KW-0378">Hydrolase</keyword>
<keyword id="KW-0395">Inflammatory response</keyword>
<keyword id="KW-0472">Membrane</keyword>
<keyword id="KW-0479">Metal-binding</keyword>
<keyword id="KW-0482">Metalloprotease</keyword>
<keyword id="KW-0597">Phosphoprotein</keyword>
<keyword id="KW-0645">Protease</keyword>
<keyword id="KW-1267">Proteomics identification</keyword>
<keyword id="KW-1185">Reference proteome</keyword>
<keyword id="KW-0964">Secreted</keyword>
<keyword id="KW-0732">Signal</keyword>
<keyword id="KW-0812">Transmembrane</keyword>
<keyword id="KW-1133">Transmembrane helix</keyword>
<keyword id="KW-0862">Zinc</keyword>
<keyword id="KW-0865">Zymogen</keyword>
<protein>
    <recommendedName>
        <fullName>Meprin A subunit beta</fullName>
        <ecNumber evidence="20">3.4.24.63</ecNumber>
    </recommendedName>
    <alternativeName>
        <fullName>Endopeptidase-2</fullName>
    </alternativeName>
    <alternativeName>
        <fullName>Meprin B</fullName>
    </alternativeName>
    <alternativeName>
        <fullName>N-benzoyl-L-tyrosyl-P-amino-benzoic acid hydrolase subunit beta</fullName>
    </alternativeName>
    <alternativeName>
        <fullName>PABA peptide hydrolase</fullName>
    </alternativeName>
    <alternativeName>
        <fullName>PPH beta</fullName>
    </alternativeName>
</protein>
<reference key="1">
    <citation type="journal article" date="1997" name="Eur. J. Biochem.">
        <title>Polarised expression of human intestinal N-benzoyl-L-tyrosyl-p-aminobenzoic acid hydrolase (human meprin) alpha and beta subunits in Madin-Darby canine kidney cells.</title>
        <authorList>
            <person name="Eldering J.A."/>
            <person name="Gruenberg J."/>
            <person name="Hahn D."/>
            <person name="Croes H.J."/>
            <person name="Fransen J.A."/>
            <person name="Sterchi E.E."/>
        </authorList>
    </citation>
    <scope>NUCLEOTIDE SEQUENCE [MRNA]</scope>
    <scope>PROTEIN SEQUENCE OF 62-105</scope>
    <scope>VARIANT LEU-695</scope>
    <source>
        <tissue>Intestine</tissue>
    </source>
</reference>
<reference key="2">
    <citation type="submission" date="2004-07" db="EMBL/GenBank/DDBJ databases">
        <title>Expression of human meprin beta.</title>
        <authorList>
            <person name="Haun R.S."/>
        </authorList>
    </citation>
    <scope>NUCLEOTIDE SEQUENCE [MRNA]</scope>
    <source>
        <tissue>Small intestine</tissue>
    </source>
</reference>
<reference key="3">
    <citation type="journal article" date="2004" name="Genome Res.">
        <title>The status, quality, and expansion of the NIH full-length cDNA project: the Mammalian Gene Collection (MGC).</title>
        <authorList>
            <consortium name="The MGC Project Team"/>
        </authorList>
    </citation>
    <scope>NUCLEOTIDE SEQUENCE [LARGE SCALE MRNA]</scope>
    <scope>VARIANT LEU-695</scope>
    <source>
        <tissue>Testis</tissue>
    </source>
</reference>
<reference key="4">
    <citation type="journal article" date="1993" name="FEBS Lett.">
        <title>Cloning of the PABA peptide hydrolase alpha subunit (PPH alpha) from human small intestine and its expression in COS-1 cells.</title>
        <authorList>
            <person name="Dumermuth E."/>
            <person name="Eldering J.A."/>
            <person name="Gruenberg J."/>
            <person name="Jiang W."/>
            <person name="Sterchi E.E."/>
        </authorList>
    </citation>
    <scope>PROTEIN SEQUENCE OF 62-79</scope>
    <source>
        <tissue>Small intestine mucosa</tissue>
    </source>
</reference>
<reference key="5">
    <citation type="journal article" date="1999" name="Eur. J. Biochem.">
        <title>N-Benzoyl-L-tyrosyl-p-aminobenzoic acid hydrolase beta (human meprinbeta). A 13-amino-acid sequence is required for proteolytic processing and subsequent secretion.</title>
        <authorList>
            <person name="Pischitzis A."/>
            <person name="Hahn D."/>
            <person name="Leuenberger B."/>
            <person name="Sterchi E.E."/>
        </authorList>
    </citation>
    <scope>SUBCELLULAR LOCATION</scope>
    <scope>PROTEOLYTIC PROCESSING</scope>
</reference>
<reference key="6">
    <citation type="journal article" date="2003" name="Biochem. J.">
        <title>Human meprin beta: O-linked glycans in the intervening region of the type I membrane protein protect the C-terminal region from proteolytic cleavage and diminish its secretion.</title>
        <authorList>
            <person name="Leuenberger B."/>
            <person name="Hahn D."/>
            <person name="Pischitzis A."/>
            <person name="Hansen M.K."/>
            <person name="Sterchi E.E."/>
        </authorList>
    </citation>
    <scope>GLYCOSYLATION AT SER-593; THR-594; THR-599 AND SER-603</scope>
    <scope>TISSUE SPECIFICITY</scope>
    <scope>MUTAGENESIS OF 595-GLN--LEU-607</scope>
</reference>
<reference key="7">
    <citation type="journal article" date="2003" name="J. Biol. Chem.">
        <title>Critical amino acids in the active site of meprin metalloproteinases for substrate and peptide bond specificity.</title>
        <authorList>
            <person name="Villa J.P."/>
            <person name="Bertenshaw G.P."/>
            <person name="Bond J.S."/>
        </authorList>
    </citation>
    <scope>CLEAVAGE OF GASTRIN</scope>
    <scope>SUBSTRATE SPECIFICITY</scope>
    <scope>MUTAGENESIS OF LYS-248</scope>
</reference>
<reference key="8">
    <citation type="journal article" date="2008" name="J. Biol. Chem.">
        <title>Prointerleukin-18 is activated by meprin beta in vitro and in vivo in intestinal inflammation.</title>
        <authorList>
            <person name="Banerjee S."/>
            <person name="Bond J.S."/>
        </authorList>
    </citation>
    <scope>CLEAVAGE OF IL18</scope>
</reference>
<reference key="9">
    <citation type="journal article" date="2008" name="PLoS ONE">
        <title>The metalloprotease meprinbeta processes E-cadherin and weakens intercellular adhesion.</title>
        <authorList>
            <person name="Huguenin M."/>
            <person name="Muller E.J."/>
            <person name="Trachsel-Rosmann S."/>
            <person name="Oneda B."/>
            <person name="Ambort D."/>
            <person name="Sterchi E.E."/>
            <person name="Lottaz D."/>
        </authorList>
    </citation>
    <scope>CLEAVAGE OF E-CADHERIN</scope>
</reference>
<reference key="10">
    <citation type="journal article" date="2010" name="Biochemistry">
        <title>Fetuin-A and cystatin C are endogenous inhibitors of human meprin metalloproteases.</title>
        <authorList>
            <person name="Hedrich J."/>
            <person name="Lottaz D."/>
            <person name="Meyer K."/>
            <person name="Yiallouros I."/>
            <person name="Jahnen-Dechent W."/>
            <person name="Stocker W."/>
            <person name="Becker-Pauly C."/>
        </authorList>
    </citation>
    <scope>ACTIVITY REGULATION</scope>
</reference>
<reference key="11">
    <citation type="journal article" date="2010" name="Matrix Biol.">
        <title>Specific processing of tenascin-C by the metalloprotease meprinbeta neutralizes its inhibition of cell spreading.</title>
        <authorList>
            <person name="Ambort D."/>
            <person name="Brellier F."/>
            <person name="Becker-Pauly C."/>
            <person name="Stocker W."/>
            <person name="Andrejevic-Blant S."/>
            <person name="Chiquet M."/>
            <person name="Sterchi E.E."/>
        </authorList>
    </citation>
    <scope>CLEAVAGE OF TNC</scope>
</reference>
<reference key="12">
    <citation type="journal article" date="2011" name="Mol. Cell. Proteomics">
        <title>Proteomic analyses reveal an acidic prime side specificity for the astacin metalloprotease family reflected by physiological substrates.</title>
        <authorList>
            <person name="Becker-Pauly C."/>
            <person name="Barre O."/>
            <person name="Schilling O."/>
            <person name="Auf dem Keller U."/>
            <person name="Ohler A."/>
            <person name="Broder C."/>
            <person name="Schutte A."/>
            <person name="Kappelhoff R."/>
            <person name="Stocker W."/>
            <person name="Overall C.M."/>
        </authorList>
    </citation>
    <scope>FUNCTION</scope>
    <scope>CATALYTIC ACTIVITY</scope>
    <scope>SUBSTRATE SPECIFICITY</scope>
    <scope>CLEAVAGE OF FGF19; KLK7 AND VGFA</scope>
</reference>
<reference key="13">
    <citation type="journal article" date="2013" name="Cell. Mol. Life Sci.">
        <title>The substrate degradome of meprin metalloproteases reveals an unexpected proteolytic link between meprin beta and ADAM10.</title>
        <authorList>
            <person name="Jefferson T."/>
            <person name="Auf dem Keller U."/>
            <person name="Bellac C."/>
            <person name="Metz V.V."/>
            <person name="Broder C."/>
            <person name="Hedrich J."/>
            <person name="Ohler A."/>
            <person name="Maier W."/>
            <person name="Magdolen V."/>
            <person name="Sterchi E."/>
            <person name="Bond J.S."/>
            <person name="Jayakumar A."/>
            <person name="Traupe H."/>
            <person name="Chalaris A."/>
            <person name="Rose-John S."/>
            <person name="Pietrzik C.U."/>
            <person name="Postina R."/>
            <person name="Overall C.M."/>
            <person name="Becker-Pauly C."/>
        </authorList>
    </citation>
    <scope>CLEAVAGE OF ADAM10</scope>
    <scope>ACTIVITY REGULATION</scope>
</reference>
<reference key="14">
    <citation type="journal article" date="2016" name="Biol. Chem.">
        <title>Tetraspanin 8 is an interactor of the metalloprotease meprin beta within tetraspanin-enriched microdomains.</title>
        <authorList>
            <person name="Schmidt F."/>
            <person name="Mueller M."/>
            <person name="Prox J."/>
            <person name="Arnold P."/>
            <person name="Schoenherr C."/>
            <person name="Tredup C."/>
            <person name="Minder P."/>
            <person name="Ebsen H."/>
            <person name="Janssen O."/>
            <person name="Annaert W."/>
            <person name="Pietrzik C."/>
            <person name="Schmidt-Arras D."/>
            <person name="Sterchi E.E."/>
            <person name="Becker-Pauly C."/>
        </authorList>
    </citation>
    <scope>FUNCTION</scope>
    <scope>INTERACTION WITH TSPAN8</scope>
    <scope>SUBCELLULAR LOCATION</scope>
</reference>
<reference key="15">
    <citation type="journal article" date="2021" name="FASEB J.">
        <title>Phosphorylation of meprin beta controls its cell surface abundance and subsequently diminishes ectodomain shedding.</title>
        <authorList>
            <person name="Armbrust F."/>
            <person name="Bickenbach K."/>
            <person name="Koudelka T."/>
            <person name="Tholey A."/>
            <person name="Pietrzik C."/>
            <person name="Becker-Pauly C."/>
        </authorList>
    </citation>
    <scope>PHOSPHORYLATION AT THR-694</scope>
    <scope>SUBCELLULAR LOCATION</scope>
    <scope>MUTAGENESIS OF GLU-153 AND THR-694</scope>
    <scope>CATALYTIC ACTIVITY</scope>
</reference>
<reference key="16">
    <citation type="journal article" date="2012" name="Proc. Natl. Acad. Sci. U.S.A.">
        <title>Structural basis for the sheddase function of human meprin beta metalloproteinase at the plasma membrane.</title>
        <authorList>
            <person name="Arolas J.L."/>
            <person name="Broder C."/>
            <person name="Jefferson T."/>
            <person name="Guevara T."/>
            <person name="Sterchi E.E."/>
            <person name="Bode W."/>
            <person name="Stocker W."/>
            <person name="Becker-Pauly C."/>
            <person name="Gomis-Ruth F.X."/>
        </authorList>
    </citation>
    <scope>X-RAY CRYSTALLOGRAPHY (1.85 ANGSTROMS) OF 25-614</scope>
    <scope>GLYCOSYLATION AT ASN-218; ASN-254; ASN-370; ASN-436; ASN-445; ASN-547 AND ASN-592</scope>
    <scope>DISULFIDE BONDS</scope>
    <scope>COFACTOR</scope>
    <scope>ZINC-BINDING SITES</scope>
    <scope>SUBUNIT</scope>
    <scope>SUBCELLULAR LOCATION</scope>
</reference>
<reference key="17">
    <citation type="journal article" date="2012" name="N. Engl. J. Med.">
        <title>Diagnostic exome sequencing in persons with severe intellectual disability.</title>
        <authorList>
            <person name="de Ligt J."/>
            <person name="Willemsen M.H."/>
            <person name="van Bon B.W."/>
            <person name="Kleefstra T."/>
            <person name="Yntema H.G."/>
            <person name="Kroes T."/>
            <person name="Vulto-van Silfhout A.T."/>
            <person name="Koolen D.A."/>
            <person name="de Vries P."/>
            <person name="Gilissen C."/>
            <person name="del Rosario M."/>
            <person name="Hoischen A."/>
            <person name="Scheffer H."/>
            <person name="de Vries B.B."/>
            <person name="Brunner H.G."/>
            <person name="Veltman J.A."/>
            <person name="Vissers L.E."/>
        </authorList>
    </citation>
    <scope>VARIANT ALA-324</scope>
</reference>
<feature type="signal peptide" evidence="2">
    <location>
        <begin position="1"/>
        <end position="22"/>
    </location>
</feature>
<feature type="propeptide" id="PRO_0000028883" evidence="21 22">
    <location>
        <begin position="23"/>
        <end position="61"/>
    </location>
</feature>
<feature type="chain" id="PRO_0000028884" description="Meprin A subunit beta">
    <location>
        <begin position="62"/>
        <end position="701"/>
    </location>
</feature>
<feature type="topological domain" description="Extracellular" evidence="2">
    <location>
        <begin position="23"/>
        <end position="652"/>
    </location>
</feature>
<feature type="transmembrane region" description="Helical" evidence="2">
    <location>
        <begin position="653"/>
        <end position="673"/>
    </location>
</feature>
<feature type="topological domain" description="Cytoplasmic" evidence="2">
    <location>
        <begin position="674"/>
        <end position="701"/>
    </location>
</feature>
<feature type="domain" description="Peptidase M12A" evidence="6">
    <location>
        <begin position="62"/>
        <end position="256"/>
    </location>
</feature>
<feature type="domain" description="MAM" evidence="4">
    <location>
        <begin position="260"/>
        <end position="429"/>
    </location>
</feature>
<feature type="domain" description="MATH" evidence="5">
    <location>
        <begin position="430"/>
        <end position="585"/>
    </location>
</feature>
<feature type="domain" description="EGF-like" evidence="3">
    <location>
        <begin position="604"/>
        <end position="644"/>
    </location>
</feature>
<feature type="region of interest" description="Required for proteolytic processing">
    <location>
        <begin position="595"/>
        <end position="607"/>
    </location>
</feature>
<feature type="active site" evidence="6">
    <location>
        <position position="153"/>
    </location>
</feature>
<feature type="binding site" evidence="6 17 24">
    <location>
        <position position="152"/>
    </location>
    <ligand>
        <name>Zn(2+)</name>
        <dbReference type="ChEBI" id="CHEBI:29105"/>
        <note>catalytic</note>
    </ligand>
</feature>
<feature type="binding site" evidence="6 17 24">
    <location>
        <position position="156"/>
    </location>
    <ligand>
        <name>Zn(2+)</name>
        <dbReference type="ChEBI" id="CHEBI:29105"/>
        <note>catalytic</note>
    </ligand>
</feature>
<feature type="binding site" evidence="6 17 24">
    <location>
        <position position="162"/>
    </location>
    <ligand>
        <name>Zn(2+)</name>
        <dbReference type="ChEBI" id="CHEBI:29105"/>
        <note>catalytic</note>
    </ligand>
</feature>
<feature type="site" description="Mediates preference for acidic residues at subsite P1'">
    <location>
        <position position="238"/>
    </location>
</feature>
<feature type="modified residue" description="Phosphothreonine" evidence="20">
    <location>
        <position position="694"/>
    </location>
</feature>
<feature type="glycosylation site" description="N-linked (GlcNAc...) asparagine" evidence="17">
    <location>
        <position position="218"/>
    </location>
</feature>
<feature type="glycosylation site" description="N-linked (GlcNAc...) asparagine" evidence="17">
    <location>
        <position position="254"/>
    </location>
</feature>
<feature type="glycosylation site" description="N-linked (GlcNAc...) asparagine" evidence="17">
    <location>
        <position position="370"/>
    </location>
</feature>
<feature type="glycosylation site" description="N-linked (GlcNAc...) asparagine" evidence="2">
    <location>
        <position position="421"/>
    </location>
</feature>
<feature type="glycosylation site" description="N-linked (GlcNAc...) asparagine" evidence="17">
    <location>
        <position position="436"/>
    </location>
</feature>
<feature type="glycosylation site" description="N-linked (GlcNAc...) asparagine" evidence="17">
    <location>
        <position position="445"/>
    </location>
</feature>
<feature type="glycosylation site" description="N-linked (GlcNAc...) asparagine" evidence="17">
    <location>
        <position position="547"/>
    </location>
</feature>
<feature type="glycosylation site" description="N-linked (GlcNAc...) asparagine" evidence="17">
    <location>
        <position position="592"/>
    </location>
</feature>
<feature type="glycosylation site" description="O-linked (GalNAc...) serine" evidence="2">
    <location>
        <position position="593"/>
    </location>
</feature>
<feature type="glycosylation site" description="O-linked (GalNAc...) threonine" evidence="2">
    <location>
        <position position="594"/>
    </location>
</feature>
<feature type="glycosylation site" description="O-linked (GalNAc...) threonine" evidence="2">
    <location>
        <position position="599"/>
    </location>
</feature>
<feature type="glycosylation site" description="O-linked (GalNAc...) serine" evidence="2">
    <location>
        <position position="603"/>
    </location>
</feature>
<feature type="disulfide bond" evidence="6 17">
    <location>
        <begin position="103"/>
        <end position="255"/>
    </location>
</feature>
<feature type="disulfide bond" evidence="6 17">
    <location>
        <begin position="124"/>
        <end position="144"/>
    </location>
</feature>
<feature type="disulfide bond" evidence="3 17">
    <location>
        <begin position="265"/>
        <end position="427"/>
    </location>
</feature>
<feature type="disulfide bond" description="Interchain" evidence="3">
    <location>
        <position position="273"/>
    </location>
</feature>
<feature type="disulfide bond" description="Interchain" evidence="3 17">
    <location>
        <position position="305"/>
    </location>
</feature>
<feature type="disulfide bond" description="Interchain" evidence="3">
    <location>
        <position position="492"/>
    </location>
</feature>
<feature type="disulfide bond" evidence="3">
    <location>
        <begin position="608"/>
        <end position="619"/>
    </location>
</feature>
<feature type="disulfide bond" evidence="3">
    <location>
        <begin position="613"/>
        <end position="628"/>
    </location>
</feature>
<feature type="disulfide bond" evidence="3">
    <location>
        <begin position="630"/>
        <end position="643"/>
    </location>
</feature>
<feature type="sequence variant" id="VAR_069387" evidence="18">
    <original>T</original>
    <variation>A</variation>
    <location>
        <position position="324"/>
    </location>
</feature>
<feature type="sequence variant" id="VAR_057064" description="In dbSNP:rs9959396.">
    <original>V</original>
    <variation>M</variation>
    <location>
        <position position="326"/>
    </location>
</feature>
<feature type="sequence variant" id="VAR_057065" description="In dbSNP:rs616114." evidence="10 22">
    <original>P</original>
    <variation>L</variation>
    <location>
        <position position="695"/>
    </location>
</feature>
<feature type="mutagenesis site" description="Complete loss of activity." evidence="20">
    <original>E</original>
    <variation>A</variation>
    <location>
        <position position="153"/>
    </location>
</feature>
<feature type="mutagenesis site" description="Decreased activity toward gastrin." evidence="9">
    <original>K</original>
    <variation>Y</variation>
    <location>
        <position position="248"/>
    </location>
</feature>
<feature type="mutagenesis site" description="Abolishes secretion." evidence="8">
    <location>
        <begin position="595"/>
        <end position="607"/>
    </location>
</feature>
<feature type="mutagenesis site" description="Almost complete loss of phosphorylation." evidence="20">
    <original>T</original>
    <variation>E</variation>
    <location>
        <position position="694"/>
    </location>
</feature>
<feature type="sequence conflict" description="In Ref. 4; AA sequence." evidence="23" ref="4">
    <original>W</original>
    <variation>S</variation>
    <location>
        <position position="71"/>
    </location>
</feature>
<feature type="sequence conflict" description="In Ref. 4; AA sequence." evidence="23" ref="4">
    <original>T</original>
    <variation>P</variation>
    <location>
        <position position="74"/>
    </location>
</feature>
<feature type="sequence conflict" description="In Ref. 2; AAU05377 and 3; AAI36560/AAI44245." evidence="23" ref="2 3">
    <original>S</original>
    <variation>P</variation>
    <location>
        <position position="546"/>
    </location>
</feature>
<feature type="sequence conflict" description="In Ref. 1; CAA57107." evidence="23" ref="1">
    <location>
        <position position="698"/>
    </location>
</feature>
<feature type="turn" evidence="25">
    <location>
        <begin position="29"/>
        <end position="32"/>
    </location>
</feature>
<feature type="helix" evidence="25">
    <location>
        <begin position="37"/>
        <end position="43"/>
    </location>
</feature>
<feature type="turn" evidence="25">
    <location>
        <begin position="50"/>
        <end position="52"/>
    </location>
</feature>
<feature type="strand" evidence="26">
    <location>
        <begin position="63"/>
        <end position="65"/>
    </location>
</feature>
<feature type="helix" evidence="25">
    <location>
        <begin position="67"/>
        <end position="69"/>
    </location>
</feature>
<feature type="strand" evidence="25">
    <location>
        <begin position="73"/>
        <end position="79"/>
    </location>
</feature>
<feature type="helix" evidence="25">
    <location>
        <begin position="85"/>
        <end position="101"/>
    </location>
</feature>
<feature type="strand" evidence="25">
    <location>
        <begin position="105"/>
        <end position="108"/>
    </location>
</feature>
<feature type="strand" evidence="25">
    <location>
        <begin position="113"/>
        <end position="119"/>
    </location>
</feature>
<feature type="strand" evidence="25">
    <location>
        <begin position="122"/>
        <end position="126"/>
    </location>
</feature>
<feature type="strand" evidence="25">
    <location>
        <begin position="133"/>
        <end position="140"/>
    </location>
</feature>
<feature type="helix" evidence="25">
    <location>
        <begin position="147"/>
        <end position="158"/>
    </location>
</feature>
<feature type="helix" evidence="27">
    <location>
        <begin position="163"/>
        <end position="165"/>
    </location>
</feature>
<feature type="helix" evidence="25">
    <location>
        <begin position="169"/>
        <end position="171"/>
    </location>
</feature>
<feature type="strand" evidence="25">
    <location>
        <begin position="173"/>
        <end position="175"/>
    </location>
</feature>
<feature type="helix" evidence="25">
    <location>
        <begin position="177"/>
        <end position="179"/>
    </location>
</feature>
<feature type="helix" evidence="25">
    <location>
        <begin position="185"/>
        <end position="188"/>
    </location>
</feature>
<feature type="turn" evidence="27">
    <location>
        <begin position="193"/>
        <end position="195"/>
    </location>
</feature>
<feature type="turn" evidence="25">
    <location>
        <begin position="213"/>
        <end position="216"/>
    </location>
</feature>
<feature type="strand" evidence="25">
    <location>
        <begin position="217"/>
        <end position="221"/>
    </location>
</feature>
<feature type="strand" evidence="25">
    <location>
        <begin position="223"/>
        <end position="228"/>
    </location>
</feature>
<feature type="helix" evidence="25">
    <location>
        <begin position="229"/>
        <end position="231"/>
    </location>
</feature>
<feature type="turn" evidence="25">
    <location>
        <begin position="232"/>
        <end position="236"/>
    </location>
</feature>
<feature type="helix" evidence="25">
    <location>
        <begin position="243"/>
        <end position="252"/>
    </location>
</feature>
<feature type="strand" evidence="25">
    <location>
        <begin position="259"/>
        <end position="265"/>
    </location>
</feature>
<feature type="helix" evidence="25">
    <location>
        <begin position="272"/>
        <end position="274"/>
    </location>
</feature>
<feature type="strand" evidence="25">
    <location>
        <begin position="276"/>
        <end position="278"/>
    </location>
</feature>
<feature type="strand" evidence="25">
    <location>
        <begin position="280"/>
        <end position="282"/>
    </location>
</feature>
<feature type="strand" evidence="25">
    <location>
        <begin position="285"/>
        <end position="289"/>
    </location>
</feature>
<feature type="strand" evidence="28">
    <location>
        <begin position="292"/>
        <end position="294"/>
    </location>
</feature>
<feature type="strand" evidence="27">
    <location>
        <begin position="299"/>
        <end position="301"/>
    </location>
</feature>
<feature type="strand" evidence="25">
    <location>
        <begin position="311"/>
        <end position="315"/>
    </location>
</feature>
<feature type="strand" evidence="25">
    <location>
        <begin position="317"/>
        <end position="319"/>
    </location>
</feature>
<feature type="strand" evidence="25">
    <location>
        <begin position="324"/>
        <end position="328"/>
    </location>
</feature>
<feature type="strand" evidence="25">
    <location>
        <begin position="335"/>
        <end position="337"/>
    </location>
</feature>
<feature type="strand" evidence="25">
    <location>
        <begin position="339"/>
        <end position="347"/>
    </location>
</feature>
<feature type="strand" evidence="25">
    <location>
        <begin position="354"/>
        <end position="363"/>
    </location>
</feature>
<feature type="strand" evidence="25">
    <location>
        <begin position="366"/>
        <end position="379"/>
    </location>
</feature>
<feature type="strand" evidence="25">
    <location>
        <begin position="382"/>
        <end position="384"/>
    </location>
</feature>
<feature type="strand" evidence="25">
    <location>
        <begin position="386"/>
        <end position="392"/>
    </location>
</feature>
<feature type="strand" evidence="25">
    <location>
        <begin position="398"/>
        <end position="405"/>
    </location>
</feature>
<feature type="strand" evidence="25">
    <location>
        <begin position="412"/>
        <end position="425"/>
    </location>
</feature>
<feature type="strand" evidence="25">
    <location>
        <begin position="429"/>
        <end position="434"/>
    </location>
</feature>
<feature type="helix" evidence="25">
    <location>
        <begin position="438"/>
        <end position="440"/>
    </location>
</feature>
<feature type="strand" evidence="25">
    <location>
        <begin position="447"/>
        <end position="449"/>
    </location>
</feature>
<feature type="strand" evidence="25">
    <location>
        <begin position="460"/>
        <end position="466"/>
    </location>
</feature>
<feature type="strand" evidence="25">
    <location>
        <begin position="469"/>
        <end position="480"/>
    </location>
</feature>
<feature type="helix" evidence="25">
    <location>
        <begin position="485"/>
        <end position="487"/>
    </location>
</feature>
<feature type="strand" evidence="25">
    <location>
        <begin position="494"/>
        <end position="501"/>
    </location>
</feature>
<feature type="helix" evidence="25">
    <location>
        <begin position="508"/>
        <end position="510"/>
    </location>
</feature>
<feature type="strand" evidence="25">
    <location>
        <begin position="514"/>
        <end position="519"/>
    </location>
</feature>
<feature type="strand" evidence="26">
    <location>
        <begin position="527"/>
        <end position="531"/>
    </location>
</feature>
<feature type="helix" evidence="25">
    <location>
        <begin position="536"/>
        <end position="539"/>
    </location>
</feature>
<feature type="strand" evidence="25">
    <location>
        <begin position="541"/>
        <end position="544"/>
    </location>
</feature>
<feature type="strand" evidence="25">
    <location>
        <begin position="550"/>
        <end position="564"/>
    </location>
</feature>
<feature type="helix" evidence="25">
    <location>
        <begin position="565"/>
        <end position="568"/>
    </location>
</feature>
<feature type="strand" evidence="25">
    <location>
        <begin position="573"/>
        <end position="575"/>
    </location>
</feature>
<feature type="strand" evidence="25">
    <location>
        <begin position="578"/>
        <end position="587"/>
    </location>
</feature>
<feature type="helix" evidence="25">
    <location>
        <begin position="589"/>
        <end position="591"/>
    </location>
</feature>